<accession>A5CWN5</accession>
<comment type="function">
    <text evidence="1">Catalyzes the stereoinversion of LL-2,6-diaminopimelate (L,L-DAP) to meso-diaminopimelate (meso-DAP), a precursor of L-lysine and an essential component of the bacterial peptidoglycan.</text>
</comment>
<comment type="catalytic activity">
    <reaction evidence="1">
        <text>(2S,6S)-2,6-diaminopimelate = meso-2,6-diaminopimelate</text>
        <dbReference type="Rhea" id="RHEA:15393"/>
        <dbReference type="ChEBI" id="CHEBI:57609"/>
        <dbReference type="ChEBI" id="CHEBI:57791"/>
        <dbReference type="EC" id="5.1.1.7"/>
    </reaction>
</comment>
<comment type="pathway">
    <text evidence="1">Amino-acid biosynthesis; L-lysine biosynthesis via DAP pathway; DL-2,6-diaminopimelate from LL-2,6-diaminopimelate: step 1/1.</text>
</comment>
<comment type="subunit">
    <text evidence="1">Homodimer.</text>
</comment>
<comment type="subcellular location">
    <subcellularLocation>
        <location evidence="1">Cytoplasm</location>
    </subcellularLocation>
</comment>
<comment type="similarity">
    <text evidence="1">Belongs to the diaminopimelate epimerase family.</text>
</comment>
<sequence>MLINFTKMHGLGNDFMVVDNLAGDITFNAKKITNLANRAFGIGFDQLLVVETSNIRGVDFRYVIYNSNGSEVEQCGNGARCFARFVNYKNLTHSNPITVKTRSNIISLHLNDDNTVCVDMGKPSFNPADIPLLVPQQSEYYQIEGFDLGAISIGNPHCVMLVKDVNTIDVNTIALKIQQSELLPNQANIGFMQILNTHEINLRVYERGSEETLACGSGACAAVAYGVEQGLLKKNVVVHLSGGDALIEYTQGGHIFLSGPAQFVFEGQVEI</sequence>
<dbReference type="EC" id="5.1.1.7" evidence="1"/>
<dbReference type="EMBL" id="AP009247">
    <property type="protein sequence ID" value="BAF61624.1"/>
    <property type="molecule type" value="Genomic_DNA"/>
</dbReference>
<dbReference type="RefSeq" id="WP_011929894.1">
    <property type="nucleotide sequence ID" value="NC_009465.1"/>
</dbReference>
<dbReference type="SMR" id="A5CWN5"/>
<dbReference type="STRING" id="412965.COSY_0505"/>
<dbReference type="KEGG" id="vok:COSY_0505"/>
<dbReference type="eggNOG" id="COG0253">
    <property type="taxonomic scope" value="Bacteria"/>
</dbReference>
<dbReference type="HOGENOM" id="CLU_053306_1_1_6"/>
<dbReference type="OrthoDB" id="9805408at2"/>
<dbReference type="UniPathway" id="UPA00034">
    <property type="reaction ID" value="UER00025"/>
</dbReference>
<dbReference type="Proteomes" id="UP000000247">
    <property type="component" value="Chromosome"/>
</dbReference>
<dbReference type="GO" id="GO:0005829">
    <property type="term" value="C:cytosol"/>
    <property type="evidence" value="ECO:0007669"/>
    <property type="project" value="TreeGrafter"/>
</dbReference>
<dbReference type="GO" id="GO:0008837">
    <property type="term" value="F:diaminopimelate epimerase activity"/>
    <property type="evidence" value="ECO:0007669"/>
    <property type="project" value="UniProtKB-UniRule"/>
</dbReference>
<dbReference type="GO" id="GO:0009089">
    <property type="term" value="P:lysine biosynthetic process via diaminopimelate"/>
    <property type="evidence" value="ECO:0007669"/>
    <property type="project" value="UniProtKB-UniRule"/>
</dbReference>
<dbReference type="FunFam" id="3.10.310.10:FF:000001">
    <property type="entry name" value="Diaminopimelate epimerase"/>
    <property type="match status" value="1"/>
</dbReference>
<dbReference type="Gene3D" id="3.10.310.10">
    <property type="entry name" value="Diaminopimelate Epimerase, Chain A, domain 1"/>
    <property type="match status" value="2"/>
</dbReference>
<dbReference type="HAMAP" id="MF_00197">
    <property type="entry name" value="DAP_epimerase"/>
    <property type="match status" value="1"/>
</dbReference>
<dbReference type="InterPro" id="IPR018510">
    <property type="entry name" value="DAP_epimerase_AS"/>
</dbReference>
<dbReference type="InterPro" id="IPR001653">
    <property type="entry name" value="DAP_epimerase_DapF"/>
</dbReference>
<dbReference type="NCBIfam" id="TIGR00652">
    <property type="entry name" value="DapF"/>
    <property type="match status" value="1"/>
</dbReference>
<dbReference type="PANTHER" id="PTHR31689:SF0">
    <property type="entry name" value="DIAMINOPIMELATE EPIMERASE"/>
    <property type="match status" value="1"/>
</dbReference>
<dbReference type="PANTHER" id="PTHR31689">
    <property type="entry name" value="DIAMINOPIMELATE EPIMERASE, CHLOROPLASTIC"/>
    <property type="match status" value="1"/>
</dbReference>
<dbReference type="Pfam" id="PF01678">
    <property type="entry name" value="DAP_epimerase"/>
    <property type="match status" value="2"/>
</dbReference>
<dbReference type="SUPFAM" id="SSF54506">
    <property type="entry name" value="Diaminopimelate epimerase-like"/>
    <property type="match status" value="2"/>
</dbReference>
<dbReference type="PROSITE" id="PS01326">
    <property type="entry name" value="DAP_EPIMERASE"/>
    <property type="match status" value="1"/>
</dbReference>
<reference key="1">
    <citation type="journal article" date="2007" name="Curr. Biol.">
        <title>Reduced genome of the thioautotrophic intracellular symbiont in a deep-sea clam, Calyptogena okutanii.</title>
        <authorList>
            <person name="Kuwahara H."/>
            <person name="Yoshida T."/>
            <person name="Takaki Y."/>
            <person name="Shimamura S."/>
            <person name="Nishi S."/>
            <person name="Harada M."/>
            <person name="Matsuyama K."/>
            <person name="Takishita K."/>
            <person name="Kawato M."/>
            <person name="Uematsu K."/>
            <person name="Fujiwara Y."/>
            <person name="Sato T."/>
            <person name="Kato C."/>
            <person name="Kitagawa M."/>
            <person name="Kato I."/>
            <person name="Maruyama T."/>
        </authorList>
    </citation>
    <scope>NUCLEOTIDE SEQUENCE [LARGE SCALE GENOMIC DNA]</scope>
    <source>
        <strain>HA</strain>
    </source>
</reference>
<organism>
    <name type="scientific">Vesicomyosocius okutanii subsp. Calyptogena okutanii (strain HA)</name>
    <dbReference type="NCBI Taxonomy" id="412965"/>
    <lineage>
        <taxon>Bacteria</taxon>
        <taxon>Pseudomonadati</taxon>
        <taxon>Pseudomonadota</taxon>
        <taxon>Gammaproteobacteria</taxon>
        <taxon>Candidatus Pseudothioglobaceae</taxon>
        <taxon>Candidatus Vesicomyosocius</taxon>
    </lineage>
</organism>
<protein>
    <recommendedName>
        <fullName evidence="1">Diaminopimelate epimerase</fullName>
        <shortName evidence="1">DAP epimerase</shortName>
        <ecNumber evidence="1">5.1.1.7</ecNumber>
    </recommendedName>
    <alternativeName>
        <fullName evidence="1">PLP-independent amino acid racemase</fullName>
    </alternativeName>
</protein>
<name>DAPF_VESOH</name>
<feature type="chain" id="PRO_1000011980" description="Diaminopimelate epimerase">
    <location>
        <begin position="1"/>
        <end position="271"/>
    </location>
</feature>
<feature type="active site" description="Proton donor" evidence="1">
    <location>
        <position position="75"/>
    </location>
</feature>
<feature type="active site" description="Proton acceptor" evidence="1">
    <location>
        <position position="215"/>
    </location>
</feature>
<feature type="binding site" evidence="1">
    <location>
        <position position="13"/>
    </location>
    <ligand>
        <name>substrate</name>
    </ligand>
</feature>
<feature type="binding site" evidence="1">
    <location>
        <position position="46"/>
    </location>
    <ligand>
        <name>substrate</name>
    </ligand>
</feature>
<feature type="binding site" evidence="1">
    <location>
        <position position="66"/>
    </location>
    <ligand>
        <name>substrate</name>
    </ligand>
</feature>
<feature type="binding site" evidence="1">
    <location>
        <begin position="76"/>
        <end position="77"/>
    </location>
    <ligand>
        <name>substrate</name>
    </ligand>
</feature>
<feature type="binding site" evidence="1">
    <location>
        <position position="155"/>
    </location>
    <ligand>
        <name>substrate</name>
    </ligand>
</feature>
<feature type="binding site" evidence="1">
    <location>
        <position position="188"/>
    </location>
    <ligand>
        <name>substrate</name>
    </ligand>
</feature>
<feature type="binding site" evidence="1">
    <location>
        <begin position="206"/>
        <end position="207"/>
    </location>
    <ligand>
        <name>substrate</name>
    </ligand>
</feature>
<feature type="binding site" evidence="1">
    <location>
        <begin position="216"/>
        <end position="217"/>
    </location>
    <ligand>
        <name>substrate</name>
    </ligand>
</feature>
<feature type="site" description="Could be important to modulate the pK values of the two catalytic cysteine residues" evidence="1">
    <location>
        <position position="157"/>
    </location>
</feature>
<feature type="site" description="Could be important to modulate the pK values of the two catalytic cysteine residues" evidence="1">
    <location>
        <position position="206"/>
    </location>
</feature>
<feature type="site" description="Important for dimerization" evidence="1">
    <location>
        <position position="265"/>
    </location>
</feature>
<proteinExistence type="inferred from homology"/>
<gene>
    <name evidence="1" type="primary">dapF</name>
    <name type="ordered locus">COSY_0505</name>
</gene>
<evidence type="ECO:0000255" key="1">
    <source>
        <dbReference type="HAMAP-Rule" id="MF_00197"/>
    </source>
</evidence>
<keyword id="KW-0028">Amino-acid biosynthesis</keyword>
<keyword id="KW-0963">Cytoplasm</keyword>
<keyword id="KW-0413">Isomerase</keyword>
<keyword id="KW-0457">Lysine biosynthesis</keyword>
<keyword id="KW-1185">Reference proteome</keyword>